<protein>
    <recommendedName>
        <fullName evidence="4">Probable xyloglucan glycosyltransferase 6</fullName>
        <ecNumber evidence="1">2.4.1.-</ecNumber>
    </recommendedName>
    <alternativeName>
        <fullName evidence="4">Cellulose synthase-like protein C6</fullName>
        <shortName evidence="4">AtCslC6</shortName>
    </alternativeName>
</protein>
<proteinExistence type="evidence at protein level"/>
<evidence type="ECO:0000250" key="1">
    <source>
        <dbReference type="UniProtKB" id="Q9LJP4"/>
    </source>
</evidence>
<evidence type="ECO:0000255" key="2"/>
<evidence type="ECO:0000269" key="3">
    <source>
    </source>
</evidence>
<evidence type="ECO:0000303" key="4">
    <source>
    </source>
</evidence>
<evidence type="ECO:0000305" key="5"/>
<evidence type="ECO:0000312" key="6">
    <source>
        <dbReference type="Araport" id="AT3G07330"/>
    </source>
</evidence>
<evidence type="ECO:0000312" key="7">
    <source>
        <dbReference type="EMBL" id="AAF02144.1"/>
    </source>
</evidence>
<dbReference type="EC" id="2.4.1.-" evidence="1"/>
<dbReference type="EMBL" id="AC009853">
    <property type="protein sequence ID" value="AAF02144.1"/>
    <property type="molecule type" value="Genomic_DNA"/>
</dbReference>
<dbReference type="EMBL" id="CP002686">
    <property type="protein sequence ID" value="AEE74529.1"/>
    <property type="molecule type" value="Genomic_DNA"/>
</dbReference>
<dbReference type="EMBL" id="CP002686">
    <property type="protein sequence ID" value="ANM64747.1"/>
    <property type="molecule type" value="Genomic_DNA"/>
</dbReference>
<dbReference type="EMBL" id="AY070454">
    <property type="protein sequence ID" value="AAL49857.1"/>
    <property type="molecule type" value="mRNA"/>
</dbReference>
<dbReference type="EMBL" id="AY142677">
    <property type="protein sequence ID" value="AAN13215.1"/>
    <property type="molecule type" value="mRNA"/>
</dbReference>
<dbReference type="RefSeq" id="NP_001326755.1">
    <property type="nucleotide sequence ID" value="NM_001337702.1"/>
</dbReference>
<dbReference type="RefSeq" id="NP_187389.1">
    <property type="nucleotide sequence ID" value="NM_111612.4"/>
</dbReference>
<dbReference type="SMR" id="Q9SRT3"/>
<dbReference type="BioGRID" id="5256">
    <property type="interactions" value="2"/>
</dbReference>
<dbReference type="FunCoup" id="Q9SRT3">
    <property type="interactions" value="378"/>
</dbReference>
<dbReference type="IntAct" id="Q9SRT3">
    <property type="interactions" value="2"/>
</dbReference>
<dbReference type="STRING" id="3702.Q9SRT3"/>
<dbReference type="CAZy" id="GT2">
    <property type="family name" value="Glycosyltransferase Family 2"/>
</dbReference>
<dbReference type="iPTMnet" id="Q9SRT3"/>
<dbReference type="PaxDb" id="3702-AT3G07330.1"/>
<dbReference type="ProteomicsDB" id="224537"/>
<dbReference type="EnsemblPlants" id="AT3G07330.1">
    <property type="protein sequence ID" value="AT3G07330.1"/>
    <property type="gene ID" value="AT3G07330"/>
</dbReference>
<dbReference type="EnsemblPlants" id="AT3G07330.2">
    <property type="protein sequence ID" value="AT3G07330.2"/>
    <property type="gene ID" value="AT3G07330"/>
</dbReference>
<dbReference type="GeneID" id="819921"/>
<dbReference type="Gramene" id="AT3G07330.1">
    <property type="protein sequence ID" value="AT3G07330.1"/>
    <property type="gene ID" value="AT3G07330"/>
</dbReference>
<dbReference type="Gramene" id="AT3G07330.2">
    <property type="protein sequence ID" value="AT3G07330.2"/>
    <property type="gene ID" value="AT3G07330"/>
</dbReference>
<dbReference type="KEGG" id="ath:AT3G07330"/>
<dbReference type="Araport" id="AT3G07330"/>
<dbReference type="TAIR" id="AT3G07330">
    <property type="gene designation" value="CSLC6"/>
</dbReference>
<dbReference type="eggNOG" id="ENOG502QTBF">
    <property type="taxonomic scope" value="Eukaryota"/>
</dbReference>
<dbReference type="HOGENOM" id="CLU_012856_1_0_1"/>
<dbReference type="InParanoid" id="Q9SRT3"/>
<dbReference type="OMA" id="EWWNKER"/>
<dbReference type="OrthoDB" id="72851at2759"/>
<dbReference type="PhylomeDB" id="Q9SRT3"/>
<dbReference type="BioCyc" id="ARA:AT3G07330-MONOMER"/>
<dbReference type="PRO" id="PR:Q9SRT3"/>
<dbReference type="Proteomes" id="UP000006548">
    <property type="component" value="Chromosome 3"/>
</dbReference>
<dbReference type="ExpressionAtlas" id="Q9SRT3">
    <property type="expression patterns" value="baseline and differential"/>
</dbReference>
<dbReference type="GO" id="GO:0005768">
    <property type="term" value="C:endosome"/>
    <property type="evidence" value="ECO:0007005"/>
    <property type="project" value="TAIR"/>
</dbReference>
<dbReference type="GO" id="GO:0005794">
    <property type="term" value="C:Golgi apparatus"/>
    <property type="evidence" value="ECO:0007005"/>
    <property type="project" value="TAIR"/>
</dbReference>
<dbReference type="GO" id="GO:0000139">
    <property type="term" value="C:Golgi membrane"/>
    <property type="evidence" value="ECO:0007669"/>
    <property type="project" value="UniProtKB-SubCell"/>
</dbReference>
<dbReference type="GO" id="GO:0000138">
    <property type="term" value="C:Golgi trans cisterna"/>
    <property type="evidence" value="ECO:0007005"/>
    <property type="project" value="TAIR"/>
</dbReference>
<dbReference type="GO" id="GO:0005802">
    <property type="term" value="C:trans-Golgi network"/>
    <property type="evidence" value="ECO:0007005"/>
    <property type="project" value="TAIR"/>
</dbReference>
<dbReference type="GO" id="GO:0016757">
    <property type="term" value="F:glycosyltransferase activity"/>
    <property type="evidence" value="ECO:0000315"/>
    <property type="project" value="UniProtKB"/>
</dbReference>
<dbReference type="GO" id="GO:0042803">
    <property type="term" value="F:protein homodimerization activity"/>
    <property type="evidence" value="ECO:0000250"/>
    <property type="project" value="UniProtKB"/>
</dbReference>
<dbReference type="GO" id="GO:0071555">
    <property type="term" value="P:cell wall organization"/>
    <property type="evidence" value="ECO:0000315"/>
    <property type="project" value="UniProtKB"/>
</dbReference>
<dbReference type="GO" id="GO:0099402">
    <property type="term" value="P:plant organ development"/>
    <property type="evidence" value="ECO:0000315"/>
    <property type="project" value="UniProtKB"/>
</dbReference>
<dbReference type="GO" id="GO:0048868">
    <property type="term" value="P:pollen tube development"/>
    <property type="evidence" value="ECO:0000315"/>
    <property type="project" value="UniProtKB"/>
</dbReference>
<dbReference type="FunFam" id="3.90.550.10:FF:000007">
    <property type="entry name" value="probable xyloglucan glycosyltransferase 5"/>
    <property type="match status" value="1"/>
</dbReference>
<dbReference type="Gene3D" id="3.90.550.10">
    <property type="entry name" value="Spore Coat Polysaccharide Biosynthesis Protein SpsA, Chain A"/>
    <property type="match status" value="1"/>
</dbReference>
<dbReference type="InterPro" id="IPR001173">
    <property type="entry name" value="Glyco_trans_2-like"/>
</dbReference>
<dbReference type="InterPro" id="IPR029044">
    <property type="entry name" value="Nucleotide-diphossugar_trans"/>
</dbReference>
<dbReference type="PANTHER" id="PTHR32044">
    <property type="entry name" value="GLUCOMANNAN 4-BETA-MANNOSYLTRANSFERASE 9"/>
    <property type="match status" value="1"/>
</dbReference>
<dbReference type="PANTHER" id="PTHR32044:SF67">
    <property type="entry name" value="XYLOGLUCAN GLYCOSYLTRANSFERASE 6-RELATED"/>
    <property type="match status" value="1"/>
</dbReference>
<dbReference type="Pfam" id="PF13632">
    <property type="entry name" value="Glyco_trans_2_3"/>
    <property type="match status" value="1"/>
</dbReference>
<dbReference type="SUPFAM" id="SSF53448">
    <property type="entry name" value="Nucleotide-diphospho-sugar transferases"/>
    <property type="match status" value="1"/>
</dbReference>
<name>CSLC6_ARATH</name>
<gene>
    <name evidence="4" type="primary">CSLC6</name>
    <name evidence="6" type="ordered locus">At3g07330</name>
    <name evidence="7" type="ORF">F21O3.4</name>
</gene>
<keyword id="KW-0961">Cell wall biogenesis/degradation</keyword>
<keyword id="KW-0328">Glycosyltransferase</keyword>
<keyword id="KW-0333">Golgi apparatus</keyword>
<keyword id="KW-0472">Membrane</keyword>
<keyword id="KW-0597">Phosphoprotein</keyword>
<keyword id="KW-1185">Reference proteome</keyword>
<keyword id="KW-0808">Transferase</keyword>
<keyword id="KW-0812">Transmembrane</keyword>
<keyword id="KW-1133">Transmembrane helix</keyword>
<reference key="1">
    <citation type="journal article" date="2000" name="Nature">
        <title>Sequence and analysis of chromosome 3 of the plant Arabidopsis thaliana.</title>
        <authorList>
            <person name="Salanoubat M."/>
            <person name="Lemcke K."/>
            <person name="Rieger M."/>
            <person name="Ansorge W."/>
            <person name="Unseld M."/>
            <person name="Fartmann B."/>
            <person name="Valle G."/>
            <person name="Bloecker H."/>
            <person name="Perez-Alonso M."/>
            <person name="Obermaier B."/>
            <person name="Delseny M."/>
            <person name="Boutry M."/>
            <person name="Grivell L.A."/>
            <person name="Mache R."/>
            <person name="Puigdomenech P."/>
            <person name="De Simone V."/>
            <person name="Choisne N."/>
            <person name="Artiguenave F."/>
            <person name="Robert C."/>
            <person name="Brottier P."/>
            <person name="Wincker P."/>
            <person name="Cattolico L."/>
            <person name="Weissenbach J."/>
            <person name="Saurin W."/>
            <person name="Quetier F."/>
            <person name="Schaefer M."/>
            <person name="Mueller-Auer S."/>
            <person name="Gabel C."/>
            <person name="Fuchs M."/>
            <person name="Benes V."/>
            <person name="Wurmbach E."/>
            <person name="Drzonek H."/>
            <person name="Erfle H."/>
            <person name="Jordan N."/>
            <person name="Bangert S."/>
            <person name="Wiedelmann R."/>
            <person name="Kranz H."/>
            <person name="Voss H."/>
            <person name="Holland R."/>
            <person name="Brandt P."/>
            <person name="Nyakatura G."/>
            <person name="Vezzi A."/>
            <person name="D'Angelo M."/>
            <person name="Pallavicini A."/>
            <person name="Toppo S."/>
            <person name="Simionati B."/>
            <person name="Conrad A."/>
            <person name="Hornischer K."/>
            <person name="Kauer G."/>
            <person name="Loehnert T.-H."/>
            <person name="Nordsiek G."/>
            <person name="Reichelt J."/>
            <person name="Scharfe M."/>
            <person name="Schoen O."/>
            <person name="Bargues M."/>
            <person name="Terol J."/>
            <person name="Climent J."/>
            <person name="Navarro P."/>
            <person name="Collado C."/>
            <person name="Perez-Perez A."/>
            <person name="Ottenwaelder B."/>
            <person name="Duchemin D."/>
            <person name="Cooke R."/>
            <person name="Laudie M."/>
            <person name="Berger-Llauro C."/>
            <person name="Purnelle B."/>
            <person name="Masuy D."/>
            <person name="de Haan M."/>
            <person name="Maarse A.C."/>
            <person name="Alcaraz J.-P."/>
            <person name="Cottet A."/>
            <person name="Casacuberta E."/>
            <person name="Monfort A."/>
            <person name="Argiriou A."/>
            <person name="Flores M."/>
            <person name="Liguori R."/>
            <person name="Vitale D."/>
            <person name="Mannhaupt G."/>
            <person name="Haase D."/>
            <person name="Schoof H."/>
            <person name="Rudd S."/>
            <person name="Zaccaria P."/>
            <person name="Mewes H.-W."/>
            <person name="Mayer K.F.X."/>
            <person name="Kaul S."/>
            <person name="Town C.D."/>
            <person name="Koo H.L."/>
            <person name="Tallon L.J."/>
            <person name="Jenkins J."/>
            <person name="Rooney T."/>
            <person name="Rizzo M."/>
            <person name="Walts A."/>
            <person name="Utterback T."/>
            <person name="Fujii C.Y."/>
            <person name="Shea T.P."/>
            <person name="Creasy T.H."/>
            <person name="Haas B."/>
            <person name="Maiti R."/>
            <person name="Wu D."/>
            <person name="Peterson J."/>
            <person name="Van Aken S."/>
            <person name="Pai G."/>
            <person name="Militscher J."/>
            <person name="Sellers P."/>
            <person name="Gill J.E."/>
            <person name="Feldblyum T.V."/>
            <person name="Preuss D."/>
            <person name="Lin X."/>
            <person name="Nierman W.C."/>
            <person name="Salzberg S.L."/>
            <person name="White O."/>
            <person name="Venter J.C."/>
            <person name="Fraser C.M."/>
            <person name="Kaneko T."/>
            <person name="Nakamura Y."/>
            <person name="Sato S."/>
            <person name="Kato T."/>
            <person name="Asamizu E."/>
            <person name="Sasamoto S."/>
            <person name="Kimura T."/>
            <person name="Idesawa K."/>
            <person name="Kawashima K."/>
            <person name="Kishida Y."/>
            <person name="Kiyokawa C."/>
            <person name="Kohara M."/>
            <person name="Matsumoto M."/>
            <person name="Matsuno A."/>
            <person name="Muraki A."/>
            <person name="Nakayama S."/>
            <person name="Nakazaki N."/>
            <person name="Shinpo S."/>
            <person name="Takeuchi C."/>
            <person name="Wada T."/>
            <person name="Watanabe A."/>
            <person name="Yamada M."/>
            <person name="Yasuda M."/>
            <person name="Tabata S."/>
        </authorList>
    </citation>
    <scope>NUCLEOTIDE SEQUENCE [LARGE SCALE GENOMIC DNA]</scope>
    <source>
        <strain>cv. Columbia</strain>
    </source>
</reference>
<reference key="2">
    <citation type="journal article" date="2017" name="Plant J.">
        <title>Araport11: a complete reannotation of the Arabidopsis thaliana reference genome.</title>
        <authorList>
            <person name="Cheng C.Y."/>
            <person name="Krishnakumar V."/>
            <person name="Chan A.P."/>
            <person name="Thibaud-Nissen F."/>
            <person name="Schobel S."/>
            <person name="Town C.D."/>
        </authorList>
    </citation>
    <scope>GENOME REANNOTATION</scope>
    <source>
        <strain>cv. Columbia</strain>
    </source>
</reference>
<reference key="3">
    <citation type="journal article" date="2003" name="Science">
        <title>Empirical analysis of transcriptional activity in the Arabidopsis genome.</title>
        <authorList>
            <person name="Yamada K."/>
            <person name="Lim J."/>
            <person name="Dale J.M."/>
            <person name="Chen H."/>
            <person name="Shinn P."/>
            <person name="Palm C.J."/>
            <person name="Southwick A.M."/>
            <person name="Wu H.C."/>
            <person name="Kim C.J."/>
            <person name="Nguyen M."/>
            <person name="Pham P.K."/>
            <person name="Cheuk R.F."/>
            <person name="Karlin-Newmann G."/>
            <person name="Liu S.X."/>
            <person name="Lam B."/>
            <person name="Sakano H."/>
            <person name="Wu T."/>
            <person name="Yu G."/>
            <person name="Miranda M."/>
            <person name="Quach H.L."/>
            <person name="Tripp M."/>
            <person name="Chang C.H."/>
            <person name="Lee J.M."/>
            <person name="Toriumi M.J."/>
            <person name="Chan M.M."/>
            <person name="Tang C.C."/>
            <person name="Onodera C.S."/>
            <person name="Deng J.M."/>
            <person name="Akiyama K."/>
            <person name="Ansari Y."/>
            <person name="Arakawa T."/>
            <person name="Banh J."/>
            <person name="Banno F."/>
            <person name="Bowser L."/>
            <person name="Brooks S.Y."/>
            <person name="Carninci P."/>
            <person name="Chao Q."/>
            <person name="Choy N."/>
            <person name="Enju A."/>
            <person name="Goldsmith A.D."/>
            <person name="Gurjal M."/>
            <person name="Hansen N.F."/>
            <person name="Hayashizaki Y."/>
            <person name="Johnson-Hopson C."/>
            <person name="Hsuan V.W."/>
            <person name="Iida K."/>
            <person name="Karnes M."/>
            <person name="Khan S."/>
            <person name="Koesema E."/>
            <person name="Ishida J."/>
            <person name="Jiang P.X."/>
            <person name="Jones T."/>
            <person name="Kawai J."/>
            <person name="Kamiya A."/>
            <person name="Meyers C."/>
            <person name="Nakajima M."/>
            <person name="Narusaka M."/>
            <person name="Seki M."/>
            <person name="Sakurai T."/>
            <person name="Satou M."/>
            <person name="Tamse R."/>
            <person name="Vaysberg M."/>
            <person name="Wallender E.K."/>
            <person name="Wong C."/>
            <person name="Yamamura Y."/>
            <person name="Yuan S."/>
            <person name="Shinozaki K."/>
            <person name="Davis R.W."/>
            <person name="Theologis A."/>
            <person name="Ecker J.R."/>
        </authorList>
    </citation>
    <scope>NUCLEOTIDE SEQUENCE [LARGE SCALE MRNA]</scope>
    <source>
        <strain>cv. Columbia</strain>
    </source>
</reference>
<reference key="4">
    <citation type="journal article" date="2000" name="Plant Physiol.">
        <title>The cellulose synthase superfamily.</title>
        <authorList>
            <person name="Richmond T.A."/>
            <person name="Somerville C.R."/>
        </authorList>
    </citation>
    <scope>GENE FAMILY</scope>
    <scope>NOMENCLATURE</scope>
</reference>
<reference key="5">
    <citation type="journal article" date="2009" name="J. Proteomics">
        <title>Phosphoproteomic analysis of nuclei-enriched fractions from Arabidopsis thaliana.</title>
        <authorList>
            <person name="Jones A.M.E."/>
            <person name="MacLean D."/>
            <person name="Studholme D.J."/>
            <person name="Serna-Sanz A."/>
            <person name="Andreasson E."/>
            <person name="Rathjen J.P."/>
            <person name="Peck S.C."/>
        </authorList>
    </citation>
    <scope>IDENTIFICATION BY MASS SPECTROMETRY [LARGE SCALE ANALYSIS]</scope>
    <source>
        <strain>cv. Columbia</strain>
    </source>
</reference>
<reference key="6">
    <citation type="journal article" date="2009" name="Plant Physiol.">
        <title>Large-scale Arabidopsis phosphoproteome profiling reveals novel chloroplast kinase substrates and phosphorylation networks.</title>
        <authorList>
            <person name="Reiland S."/>
            <person name="Messerli G."/>
            <person name="Baerenfaller K."/>
            <person name="Gerrits B."/>
            <person name="Endler A."/>
            <person name="Grossmann J."/>
            <person name="Gruissem W."/>
            <person name="Baginsky S."/>
        </authorList>
    </citation>
    <scope>IDENTIFICATION BY MASS SPECTROMETRY [LARGE SCALE ANALYSIS]</scope>
</reference>
<reference key="7">
    <citation type="journal article" date="2020" name="Proc. Natl. Acad. Sci. U.S.A.">
        <title>The synthesis of xyloglucan, an abundant plant cell wall polysaccharide, requires CSLC function.</title>
        <authorList>
            <person name="Kim S.-J."/>
            <person name="Chandrasekar B."/>
            <person name="Rea A.C."/>
            <person name="Danhof L."/>
            <person name="Zemelis-Durfee S."/>
            <person name="Thrower N."/>
            <person name="Shepard Z.S."/>
            <person name="Pauly M."/>
            <person name="Brandizzi F."/>
            <person name="Keegstra K."/>
        </authorList>
    </citation>
    <scope>FUNCTION</scope>
    <scope>DISRUPTION PHENOTYPE</scope>
    <scope>TISSUE SPECIFICITY</scope>
    <source>
        <strain>cv. Columbia</strain>
    </source>
</reference>
<accession>Q9SRT3</accession>
<comment type="function">
    <text evidence="3">Probable beta-1,4-glucan synthase rather involved in the synthesis of the xyloglucan backbone than cellulose. Seems to work simultaneously with xyloglucan 6-xylosyltransferase. Xyloglucan is a noncellulosic polysaccharides of plant cell wall and consists of a glucan backbone substituted by xylose, galactose and fucose.</text>
</comment>
<comment type="subunit">
    <text evidence="1">Homodimer.</text>
</comment>
<comment type="subcellular location">
    <subcellularLocation>
        <location evidence="1">Golgi apparatus membrane</location>
        <topology evidence="2">Multi-pass membrane protein</topology>
    </subcellularLocation>
</comment>
<comment type="tissue specificity">
    <text evidence="3">Mainly expressed in flowers and seeds, and, to a lower extent, in seedlings, roots, leaves and stems.</text>
</comment>
<comment type="disruption phenotype">
    <text evidence="3">Normal xyloglucan (XyG) levels (PubMed:32737163). Plants missing several xyloglucan synthases (e.g. CSLC4, CSLC5, CSLC6, CSLC8 and CSLC12) have no detectable XyG levels and several associated phenotypes including reduced stems height and leaves area, as well as shorter root hairs and reduced pollen tube formation ability (PubMed:32737163).</text>
</comment>
<comment type="similarity">
    <text evidence="5">Belongs to the glycosyltransferase 2 family. Plant cellulose synthase-like C subfamily.</text>
</comment>
<organism>
    <name type="scientific">Arabidopsis thaliana</name>
    <name type="common">Mouse-ear cress</name>
    <dbReference type="NCBI Taxonomy" id="3702"/>
    <lineage>
        <taxon>Eukaryota</taxon>
        <taxon>Viridiplantae</taxon>
        <taxon>Streptophyta</taxon>
        <taxon>Embryophyta</taxon>
        <taxon>Tracheophyta</taxon>
        <taxon>Spermatophyta</taxon>
        <taxon>Magnoliopsida</taxon>
        <taxon>eudicotyledons</taxon>
        <taxon>Gunneridae</taxon>
        <taxon>Pentapetalae</taxon>
        <taxon>rosids</taxon>
        <taxon>malvids</taxon>
        <taxon>Brassicales</taxon>
        <taxon>Brassicaceae</taxon>
        <taxon>Camelineae</taxon>
        <taxon>Arabidopsis</taxon>
    </lineage>
</organism>
<sequence length="682" mass="78371">MSRSQNEEFQQWWNKQRDRNNHDVLYAGDDEAFLTVEIRTPATVDPDKDRIRTRTVRQLSRLYLLKFKQLASSFLWIGNSFLYLVRTANRRIANDNPPSVSSSARLYRLIKGFLVVVVLLLCFELAAYFKGWHFTPPSVASAEVAVEVVYAWWLEIRASYLAPPLQSLTNVCIVLFLIQSVDRLVLVLGCFWIKLRRIKPVASMEYPTKLVGEGVRLEDYPMVIVQIPMCNEKEVYQQSIGAVCMLDWPRERMLVQVLDDSSELDVQQLIKAEVQKWQQRGVRIVYRHRLIRTGYKAGNLKAAMNCEYVKDYEFVAIFDADFQPPADFLKKTVPHFKGNEELALVQTRWAFVNKDENLLTRLQNINLSFHFEVEQQVNGVFINFFGFNGTAGVWRIKALEDCGGWLERTTVEDMDIAVRAHLCGWKFIYLNDVKCLCELPESYEAYKKQQYRWHSGPMQLFRLCFFDILRSKVSAAKKANMIFLFFLLRKLILPFYSFTLFCVILPLTMFFPEANLPSWVVCYIPGIMSILNIIPAPRSFPFIVPYLLFENTMSVTKFGAMISGLFKFDSSYEWVVTKKLGRSSEADLVAYAESGSLVESTTIQRSSSDSGLTELSKLGAAKKAGKTKRNRLYRTEIALAFILLAASVRSLLSAQGIHFYFLLFQGITFVIVGLDLIGEQVS</sequence>
<feature type="chain" id="PRO_0000319343" description="Probable xyloglucan glycosyltransferase 6">
    <location>
        <begin position="1"/>
        <end position="682"/>
    </location>
</feature>
<feature type="transmembrane region" description="Helical" evidence="2">
    <location>
        <begin position="109"/>
        <end position="129"/>
    </location>
</feature>
<feature type="transmembrane region" description="Helical" evidence="2">
    <location>
        <begin position="173"/>
        <end position="193"/>
    </location>
</feature>
<feature type="transmembrane region" description="Helical" evidence="2">
    <location>
        <begin position="491"/>
        <end position="511"/>
    </location>
</feature>
<feature type="transmembrane region" description="Helical" evidence="2">
    <location>
        <begin position="516"/>
        <end position="536"/>
    </location>
</feature>
<feature type="transmembrane region" description="Helical" evidence="2">
    <location>
        <begin position="632"/>
        <end position="651"/>
    </location>
</feature>
<feature type="transmembrane region" description="Helical" evidence="2">
    <location>
        <begin position="657"/>
        <end position="677"/>
    </location>
</feature>
<feature type="active site" evidence="2">
    <location>
        <position position="260"/>
    </location>
</feature>
<feature type="active site" evidence="2">
    <location>
        <position position="413"/>
    </location>
</feature>
<feature type="binding site" evidence="2">
    <location>
        <position position="319"/>
    </location>
    <ligand>
        <name>substrate</name>
    </ligand>
</feature>
<feature type="binding site" evidence="2">
    <location>
        <position position="321"/>
    </location>
    <ligand>
        <name>substrate</name>
    </ligand>
</feature>
<feature type="modified residue" description="Phosphoserine" evidence="1">
    <location>
        <position position="608"/>
    </location>
</feature>